<evidence type="ECO:0000255" key="1">
    <source>
        <dbReference type="HAMAP-Rule" id="MF_01315"/>
    </source>
</evidence>
<evidence type="ECO:0000256" key="2">
    <source>
        <dbReference type="SAM" id="MobiDB-lite"/>
    </source>
</evidence>
<evidence type="ECO:0000305" key="3"/>
<gene>
    <name evidence="1" type="primary">rpsM</name>
    <name type="ordered locus">Blon_2213</name>
    <name type="ordered locus">BLIJ_2286</name>
</gene>
<comment type="function">
    <text evidence="1">Located at the top of the head of the 30S subunit, it contacts several helices of the 16S rRNA. In the 70S ribosome it contacts the 23S rRNA (bridge B1a) and protein L5 of the 50S subunit (bridge B1b), connecting the 2 subunits; these bridges are implicated in subunit movement. Contacts the tRNAs in the A and P-sites.</text>
</comment>
<comment type="subunit">
    <text evidence="1">Part of the 30S ribosomal subunit. Forms a loose heterodimer with protein S19. Forms two bridges to the 50S subunit in the 70S ribosome.</text>
</comment>
<comment type="similarity">
    <text evidence="1">Belongs to the universal ribosomal protein uS13 family.</text>
</comment>
<proteinExistence type="inferred from homology"/>
<feature type="chain" id="PRO_1000165602" description="Small ribosomal subunit protein uS13">
    <location>
        <begin position="1"/>
        <end position="125"/>
    </location>
</feature>
<feature type="region of interest" description="Disordered" evidence="2">
    <location>
        <begin position="90"/>
        <end position="125"/>
    </location>
</feature>
<organism>
    <name type="scientific">Bifidobacterium longum subsp. infantis (strain ATCC 15697 / DSM 20088 / JCM 1222 / NCTC 11817 / S12)</name>
    <dbReference type="NCBI Taxonomy" id="391904"/>
    <lineage>
        <taxon>Bacteria</taxon>
        <taxon>Bacillati</taxon>
        <taxon>Actinomycetota</taxon>
        <taxon>Actinomycetes</taxon>
        <taxon>Bifidobacteriales</taxon>
        <taxon>Bifidobacteriaceae</taxon>
        <taxon>Bifidobacterium</taxon>
    </lineage>
</organism>
<name>RS13_BIFLS</name>
<protein>
    <recommendedName>
        <fullName evidence="1">Small ribosomal subunit protein uS13</fullName>
    </recommendedName>
    <alternativeName>
        <fullName evidence="3">30S ribosomal protein S13</fullName>
    </alternativeName>
</protein>
<reference key="1">
    <citation type="journal article" date="2008" name="Proc. Natl. Acad. Sci. U.S.A.">
        <title>The genome sequence of Bifidobacterium longum subsp. infantis reveals adaptations for milk utilization within the infant microbiome.</title>
        <authorList>
            <person name="Sela D.A."/>
            <person name="Chapman J."/>
            <person name="Adeuya A."/>
            <person name="Kim J.H."/>
            <person name="Chen F."/>
            <person name="Whitehead T.R."/>
            <person name="Lapidus A."/>
            <person name="Rokhsar D.S."/>
            <person name="Lebrilla C.B."/>
            <person name="German J.B."/>
            <person name="Price N.P."/>
            <person name="Richardson P.M."/>
            <person name="Mills D.A."/>
        </authorList>
    </citation>
    <scope>NUCLEOTIDE SEQUENCE [LARGE SCALE GENOMIC DNA]</scope>
    <source>
        <strain>ATCC 15697 / DSM 20088 / JCM 1222 / NCTC 11817 / S12</strain>
    </source>
</reference>
<reference key="2">
    <citation type="journal article" date="2011" name="Nature">
        <title>Bifidobacteria can protect from enteropathogenic infection through production of acetate.</title>
        <authorList>
            <person name="Fukuda S."/>
            <person name="Toh H."/>
            <person name="Hase K."/>
            <person name="Oshima K."/>
            <person name="Nakanishi Y."/>
            <person name="Yoshimura K."/>
            <person name="Tobe T."/>
            <person name="Clarke J.M."/>
            <person name="Topping D.L."/>
            <person name="Suzuki T."/>
            <person name="Taylor T.D."/>
            <person name="Itoh K."/>
            <person name="Kikuchi J."/>
            <person name="Morita H."/>
            <person name="Hattori M."/>
            <person name="Ohno H."/>
        </authorList>
    </citation>
    <scope>NUCLEOTIDE SEQUENCE [LARGE SCALE GENOMIC DNA]</scope>
    <source>
        <strain>ATCC 15697 / DSM 20088 / JCM 1222 / NCTC 11817 / S12</strain>
    </source>
</reference>
<keyword id="KW-0687">Ribonucleoprotein</keyword>
<keyword id="KW-0689">Ribosomal protein</keyword>
<keyword id="KW-0694">RNA-binding</keyword>
<keyword id="KW-0699">rRNA-binding</keyword>
<keyword id="KW-0820">tRNA-binding</keyword>
<dbReference type="EMBL" id="CP001095">
    <property type="protein sequence ID" value="ACJ53272.1"/>
    <property type="molecule type" value="Genomic_DNA"/>
</dbReference>
<dbReference type="EMBL" id="AP010889">
    <property type="protein sequence ID" value="BAJ69863.1"/>
    <property type="molecule type" value="Genomic_DNA"/>
</dbReference>
<dbReference type="RefSeq" id="WP_012578466.1">
    <property type="nucleotide sequence ID" value="NZ_JDTT01000039.1"/>
</dbReference>
<dbReference type="SMR" id="B7GNB6"/>
<dbReference type="KEGG" id="bln:Blon_2213"/>
<dbReference type="KEGG" id="blon:BLIJ_2286"/>
<dbReference type="PATRIC" id="fig|391904.8.peg.2288"/>
<dbReference type="HOGENOM" id="CLU_103849_1_2_11"/>
<dbReference type="Proteomes" id="UP000001360">
    <property type="component" value="Chromosome"/>
</dbReference>
<dbReference type="GO" id="GO:0005829">
    <property type="term" value="C:cytosol"/>
    <property type="evidence" value="ECO:0007669"/>
    <property type="project" value="TreeGrafter"/>
</dbReference>
<dbReference type="GO" id="GO:0015935">
    <property type="term" value="C:small ribosomal subunit"/>
    <property type="evidence" value="ECO:0007669"/>
    <property type="project" value="TreeGrafter"/>
</dbReference>
<dbReference type="GO" id="GO:0019843">
    <property type="term" value="F:rRNA binding"/>
    <property type="evidence" value="ECO:0007669"/>
    <property type="project" value="UniProtKB-UniRule"/>
</dbReference>
<dbReference type="GO" id="GO:0003735">
    <property type="term" value="F:structural constituent of ribosome"/>
    <property type="evidence" value="ECO:0007669"/>
    <property type="project" value="InterPro"/>
</dbReference>
<dbReference type="GO" id="GO:0000049">
    <property type="term" value="F:tRNA binding"/>
    <property type="evidence" value="ECO:0007669"/>
    <property type="project" value="UniProtKB-UniRule"/>
</dbReference>
<dbReference type="GO" id="GO:0006412">
    <property type="term" value="P:translation"/>
    <property type="evidence" value="ECO:0007669"/>
    <property type="project" value="UniProtKB-UniRule"/>
</dbReference>
<dbReference type="FunFam" id="1.10.8.50:FF:000001">
    <property type="entry name" value="30S ribosomal protein S13"/>
    <property type="match status" value="1"/>
</dbReference>
<dbReference type="FunFam" id="4.10.910.10:FF:000001">
    <property type="entry name" value="30S ribosomal protein S13"/>
    <property type="match status" value="1"/>
</dbReference>
<dbReference type="Gene3D" id="1.10.8.50">
    <property type="match status" value="1"/>
</dbReference>
<dbReference type="Gene3D" id="4.10.910.10">
    <property type="entry name" value="30s ribosomal protein s13, domain 2"/>
    <property type="match status" value="1"/>
</dbReference>
<dbReference type="HAMAP" id="MF_01315">
    <property type="entry name" value="Ribosomal_uS13"/>
    <property type="match status" value="1"/>
</dbReference>
<dbReference type="InterPro" id="IPR027437">
    <property type="entry name" value="Rbsml_uS13_C"/>
</dbReference>
<dbReference type="InterPro" id="IPR001892">
    <property type="entry name" value="Ribosomal_uS13"/>
</dbReference>
<dbReference type="InterPro" id="IPR010979">
    <property type="entry name" value="Ribosomal_uS13-like_H2TH"/>
</dbReference>
<dbReference type="InterPro" id="IPR019980">
    <property type="entry name" value="Ribosomal_uS13_bac-type"/>
</dbReference>
<dbReference type="InterPro" id="IPR018269">
    <property type="entry name" value="Ribosomal_uS13_CS"/>
</dbReference>
<dbReference type="NCBIfam" id="TIGR03631">
    <property type="entry name" value="uS13_bact"/>
    <property type="match status" value="1"/>
</dbReference>
<dbReference type="PANTHER" id="PTHR10871">
    <property type="entry name" value="30S RIBOSOMAL PROTEIN S13/40S RIBOSOMAL PROTEIN S18"/>
    <property type="match status" value="1"/>
</dbReference>
<dbReference type="PANTHER" id="PTHR10871:SF1">
    <property type="entry name" value="SMALL RIBOSOMAL SUBUNIT PROTEIN US13M"/>
    <property type="match status" value="1"/>
</dbReference>
<dbReference type="Pfam" id="PF00416">
    <property type="entry name" value="Ribosomal_S13"/>
    <property type="match status" value="1"/>
</dbReference>
<dbReference type="PIRSF" id="PIRSF002134">
    <property type="entry name" value="Ribosomal_S13"/>
    <property type="match status" value="1"/>
</dbReference>
<dbReference type="SUPFAM" id="SSF46946">
    <property type="entry name" value="S13-like H2TH domain"/>
    <property type="match status" value="1"/>
</dbReference>
<dbReference type="PROSITE" id="PS00646">
    <property type="entry name" value="RIBOSOMAL_S13_1"/>
    <property type="match status" value="1"/>
</dbReference>
<dbReference type="PROSITE" id="PS50159">
    <property type="entry name" value="RIBOSOMAL_S13_2"/>
    <property type="match status" value="1"/>
</dbReference>
<sequence length="125" mass="14245">MARLAGVDIPNEKRIEIALTYIFGVGRTRAKETLAATGISPDIRVKDLTDEQLITLRDYLEANYKIEGDLRREIDADIRRKIQINCYQGQRHRKGLPVRGQRTKTNARTRKGPKRTVAGKKKATK</sequence>
<accession>B7GNB6</accession>
<accession>E8MN60</accession>